<protein>
    <recommendedName>
        <fullName>Transcriptional regulator ATRX</fullName>
        <ecNumber>3.6.4.12</ecNumber>
    </recommendedName>
    <alternativeName>
        <fullName>ATP-dependent helicase ATRX</fullName>
    </alternativeName>
    <alternativeName>
        <fullName>X-linked helicase II</fullName>
    </alternativeName>
    <alternativeName>
        <fullName>X-linked nuclear protein</fullName>
        <shortName>XNP</shortName>
    </alternativeName>
</protein>
<accession>Q7YQM4</accession>
<sequence>MTAEPMSESKLNTLVQKLHDFLAHSSEESEETSSPPRLAMNQNTDKISGSGSNSDMMENSKEEGTSSSEKSKSSGSSRSKRKPSIVTKYVESDDEKPLDDETVNEDASNENSENDITMQSLPKGTVIVQPEPVLNEDKDDFKGPEFRSRSKMKTENLKKRGEDGLHGIVSCTACGQQVNHFQKDSIYRHPSLQVLICKNCFKYYMSDDISRDSDGMDEQCRWCAEGGNLICCDFCHNAFCKKCILRNLGRKELSTIMDENNQWYCYICHPEPLLDLVTACNSVFENLEQLLQQNKKKIKVDSEKSNKVYEHTSRFSPKKTSSNCNGEEKKLDDSCSGSVTYSYSALIVPKEMIKKAKKLIETTANMNSSYVKFLKQATDNSEISSATKLRQLKAFKSVLADIKKAHLALEEDLNSEFRAMDAVNKEKNTKEHKVIDAKFETKARKGEKPCALEKKDISKSEAKLSRKQVDSEHMDQNVPTEEQRANKSTGGEHKKSDRKEEPQYEPANTSEDLDMDIVSVPSSVPEDIFENLETAMEVQSSVDHQGDGSSGTEQEVESSSVKLNISSKDNRGGIKSKTTAKVTKELYVKLTPVSLSNSPIKGADCQEVPQDKDGYKSCGLNPKLEKCGLGQENSDNEHLVENEVSLLLEESDLRRSPRVKTTPLRRPTETNPVTSNSDEECNETVKEKQKLSVPVRKKDKRNSSDSAIDNPKPNKLPKSKQSETVDQNSDSDEMLAILKEVSRMSHSSSSDTDINEIHTNHKTLYDLKTQAGKDDKGKRKRKSSTSGSDFDTKKGKSAKSSIISKKKRQTQSESSNYDSELEKEIKSMSKIGAARTTKKRIPNTKDFDSSEDEKHSKKGMDNQGHKNLKTSQEGSSDDAERKQERENFSSAEGTVDKDTTIMELRDRLPKKQQASASTDGVDKFSGKEESFTSLEVRKVAETKEKSKHLKTKTCKKVQDGLSDTAEKFLKKDQSDETSEDDKKQSKKGTEEKKKPSDFKKKVIKMEQQYESSSDGTEKLPEREEICHFPKGIKQIKNGTTDGEKKSKKIRDKTSKKKDELSDYAEKSTGKGDSCDSSEDKKSKNGAYGREKKRCKLLGKSSRKRQDCSSSDTEKYSMKEDGCNSSDKRLKRIELRERRNLSSKRNTKEIQSGSSSSDAEESSEDNKKKQQRTSSKKKAVIVKEKKRNSLRTSTKRKQADITSSSSSDIEDDDQNSIGEGSSDEQKIKPVTENLVLSSHTGFCQSSGDEALSKSVPVTVDDDDDDNDPENRIAKKMLLEEIKANLSSDEDGSSDDEPEEGKKRTGKQNEENPGDEEAKNQVNSESDSDSEESKKPRYRHRLLRHKLTVSDGESGEEKKTKPKEHKEVKGRNRRKVSSEDSEDSDFQESGVSEEVSESEDEQRPRTRSAKKAELEENQRSYKQKKKRRRIKVQEDSSSENKSNSEEEEEEKEEEEEEEEEEEEEEEDENDDSKSPGKGRKKIRKILKDDKLRTETQNALKEEEERRKRIAEREREREKLREVIEIEDASPTKCPITTKLVLDEDEETKEPLVQVHRNMVIKLKPHQVDGVQFMWDCCCESVKKTKKSPGSGCILAHCMGLGKTLQVVSFLHTVLLCDKLDFSTALVVCPLNTALNWMNEFEKWQEGLKDDEKLEVSELATVKRPQERSYMLQRWQEDGGVMIIGYEMYRNLAQGRNVKSRKLKEIFNKALVDPGPDFVVCDEGHILKNEASAVSKAMNSIRSRRRIILTGTPLQNNLIEYHCMVNFIKENLLGSIKEFRNRFINPIQNGQCADSTMVDVRVMKKRAHILYEMLAGCVQRKDYTALTKFLPPKHEYVLAVRMTSIQCKLYQYYLDHLTGVGNNSEGGRGKAGAKLFQDFQMLSRIWTHPWCLQLDYISKENKGYFDEDSMDEFIASDSDETSMSLSSDDYTKKKKKGKKGKKDSSSSGSGSDNDVEVIKVWNSRSRGGGEGNVDETGNNPSVSLKLEESKATSSSNPSSPAPDWYKDFVTDADAEVLEHSGKMVLLFEILRMAEEIGDKVLVFSQSLISLDLIEDFLELASREKTEDKDKPLIYKGEGKWLRNIDYYRLDGSTTAQSRKKWAEEFNDETNVRGRLFIISTKAGSLGINLVAANRVIIFDASWNPSYDIQSIFRVYRFGQTKPVYVYRFLAQGTMEDKIYDRQVTKQSLSFRVVDQQQVERHFTMNELTELYTFEPDLLDDPNSEKKKKRDTPMLPKDTILAELLQIHKEHIVGYHEHDSLLDHKEEEELTEEERKAAWAEYEAEKKGLTMRFNIPTGTNLPPVSFNSQTPYIPFNLGALSAMSNQQLEDLINQGREKVVEATNSVTAVRIQPLEDIISAVWKENMNLSEAQVQALALSRQASQELDVKRREAIYNDVLTKQQMLISCVQRILMNRRLQQQYNQQQQQQMTYQQATLGHLMMPKPPNLIMNPSNYQQIDMRGMYQPVAGGMQPPPLQRAPPPMRSKNPGPSQGKSM</sequence>
<keyword id="KW-0007">Acetylation</keyword>
<keyword id="KW-0067">ATP-binding</keyword>
<keyword id="KW-0156">Chromatin regulator</keyword>
<keyword id="KW-0158">Chromosome</keyword>
<keyword id="KW-0227">DNA damage</keyword>
<keyword id="KW-0234">DNA repair</keyword>
<keyword id="KW-0238">DNA-binding</keyword>
<keyword id="KW-0347">Helicase</keyword>
<keyword id="KW-0378">Hydrolase</keyword>
<keyword id="KW-1017">Isopeptide bond</keyword>
<keyword id="KW-0479">Metal-binding</keyword>
<keyword id="KW-0488">Methylation</keyword>
<keyword id="KW-0547">Nucleotide-binding</keyword>
<keyword id="KW-0539">Nucleus</keyword>
<keyword id="KW-0597">Phosphoprotein</keyword>
<keyword id="KW-1185">Reference proteome</keyword>
<keyword id="KW-0779">Telomere</keyword>
<keyword id="KW-0804">Transcription</keyword>
<keyword id="KW-0805">Transcription regulation</keyword>
<keyword id="KW-0832">Ubl conjugation</keyword>
<keyword id="KW-0862">Zinc</keyword>
<keyword id="KW-0863">Zinc-finger</keyword>
<comment type="function">
    <text evidence="2">Involved in transcriptional regulation and chromatin remodeling. Facilitates DNA replication in multiple cellular environments and is required for efficient replication of a subset of genomic loci. Binds to DNA tandem repeat sequences in both telomeres and euchromatin and in vitro binds DNA quadruplex structures. May help stabilizing G-rich regions into regular chromatin structures by remodeling G4 DNA and incorporating H3.3-containing nucleosomes. Catalytic component of the chromatin remodeling complex ATRX:DAXX which has ATP-dependent DNA translocase activity and catalyzes the replication-independent deposition of histone H3.3 in pericentric DNA repeats outside S-phase and telomeres, and the in vitro remodeling of H3.3-containing nucleosomes. Its heterochromatin targeting is proposed to involve a combinatorial readout of histone H3 modifications (specifically methylation states of H3K9 and H3K4) and association with CBX5. Involved in maintaining telomere structural integrity in embryonic stem cells which probably implies recruitment of CBX5 to telomeres. May be involved in transcriptional regulation of telomeric repeat-containing RNA (TERRA). Acts as a negative regulator of chromatin incorporation of transcriptionally repressive histone MACROH2A1, particularily at telomeres. Participates in the allele-specific gene expression at the imprinted IGF2/H19 gene locus. On the maternal allele, required for the chromatin occupancy of SMC1 and CTCTF within the H19 imprinting control region (ICR) and involved in esatblishment of histone tails modifications in the ICR. May be involved in brain development and facial morphogenesis. Binds to zinc-finger coding genes with atypical chromatin signatures and regulates its H3K9me3 levels. Forms a complex with ZNF274, TRIM28 and SETDB1 to facilitate the deposition and maintenance of H3K9me3 at the 3' exons of zinc-finger genes (By similarity).</text>
</comment>
<comment type="catalytic activity">
    <reaction>
        <text>ATP + H2O = ADP + phosphate + H(+)</text>
        <dbReference type="Rhea" id="RHEA:13065"/>
        <dbReference type="ChEBI" id="CHEBI:15377"/>
        <dbReference type="ChEBI" id="CHEBI:15378"/>
        <dbReference type="ChEBI" id="CHEBI:30616"/>
        <dbReference type="ChEBI" id="CHEBI:43474"/>
        <dbReference type="ChEBI" id="CHEBI:456216"/>
        <dbReference type="EC" id="3.6.4.12"/>
    </reaction>
</comment>
<comment type="subunit">
    <text evidence="2">Interacts with DAXX to form the chromatin remodeling complex ATRX:DAXX. Probably binds EZH2. Binds annexin V in a calcium and phosphatidylcholine/phosphatidylserine-dependent manner. Interacts directly with CBX5 via the PxVxL motif. Interacts with RAD50, MRE11 and NBN; indicative for an association with the MRN complex. Interacts with histone MACROH2A1. Interacts with histone H3 peptides methylated at 'Lys-10' with preferences H3K9me3 &gt; H3K9me2 &gt; H3K9me1. Interacts with histone H3 peptides unmethylated at 'Lys-5' (H3K4me0). Interacts with MECP2, SMC1 and SMC3. Interacts with SETDB1, TRIM28 and ZNF274 (By similarity).</text>
</comment>
<comment type="subcellular location">
    <subcellularLocation>
        <location evidence="1">Nucleus</location>
    </subcellularLocation>
    <subcellularLocation>
        <location evidence="1">Chromosome</location>
        <location evidence="1">Telomere</location>
    </subcellularLocation>
    <subcellularLocation>
        <location evidence="1">Nucleus</location>
        <location evidence="1">PML body</location>
    </subcellularLocation>
    <text evidence="1">Associated with pericentromeric heterochromatin during interphase and mitosis, probably by interacting with CBX5/HP1 alpha. Colocalizes with histone H3.3, DAXX, HIRA and ASF1A at PML-nuclear bodies. Colocalizes with cohesin (SMC1 and SMC3) and MECP2 at the maternal H19 ICR (By similarity).</text>
</comment>
<comment type="domain">
    <text evidence="1">The ADD domain predominantly interacts with histone H3 trimethylated at 'Lys-10'(H3K9me3) (and to a lesser extent H3 mono- or dimethylated at 'Lys-10') and simultaneously to histone H3 unmethylated at 'Lys-5' (H3K4me0). The interaction with H3K9me3 is disrupted by the presence of H3K4me3 suggesting a readout of the combined histone H3 methylation state (By similarity).</text>
</comment>
<comment type="domain">
    <text>Contains one Pro-Xaa-Val-Xaa-Leu (PxVxL) motif, which is required for interaction with chromoshadow domains. This motif requires additional residues -7, -6, +4 and +5 of the central Val which contact the chromoshadow domain.</text>
</comment>
<comment type="similarity">
    <text evidence="9">Belongs to the SNF2/RAD54 helicase family.</text>
</comment>
<dbReference type="EC" id="3.6.4.12"/>
<dbReference type="EMBL" id="AB102642">
    <property type="protein sequence ID" value="BAC81111.1"/>
    <property type="molecule type" value="mRNA"/>
</dbReference>
<dbReference type="RefSeq" id="NP_001009018.1">
    <property type="nucleotide sequence ID" value="NM_001009018.1"/>
</dbReference>
<dbReference type="BMRB" id="Q7YQM4"/>
<dbReference type="SMR" id="Q7YQM4"/>
<dbReference type="FunCoup" id="Q7YQM4">
    <property type="interactions" value="2367"/>
</dbReference>
<dbReference type="STRING" id="9598.ENSPTRP00000087577"/>
<dbReference type="PaxDb" id="9598-ENSPTRP00000054614"/>
<dbReference type="Ensembl" id="ENSPTRT00000111037.1">
    <property type="protein sequence ID" value="ENSPTRP00000087577.1"/>
    <property type="gene ID" value="ENSPTRG00000022047.7"/>
</dbReference>
<dbReference type="GeneID" id="449625"/>
<dbReference type="KEGG" id="ptr:449625"/>
<dbReference type="CTD" id="546"/>
<dbReference type="VGNC" id="VGNC:53808">
    <property type="gene designation" value="ATRX"/>
</dbReference>
<dbReference type="eggNOG" id="KOG1015">
    <property type="taxonomic scope" value="Eukaryota"/>
</dbReference>
<dbReference type="GeneTree" id="ENSGT00940000155902"/>
<dbReference type="InParanoid" id="Q7YQM4"/>
<dbReference type="OrthoDB" id="14607at9604"/>
<dbReference type="Proteomes" id="UP000002277">
    <property type="component" value="Chromosome X"/>
</dbReference>
<dbReference type="Bgee" id="ENSPTRG00000022047">
    <property type="expression patterns" value="Expressed in thymus and 21 other cell types or tissues"/>
</dbReference>
<dbReference type="GO" id="GO:0099115">
    <property type="term" value="C:chromosome, subtelomeric region"/>
    <property type="evidence" value="ECO:0007669"/>
    <property type="project" value="Ensembl"/>
</dbReference>
<dbReference type="GO" id="GO:0000781">
    <property type="term" value="C:chromosome, telomeric region"/>
    <property type="evidence" value="ECO:0000250"/>
    <property type="project" value="UniProtKB"/>
</dbReference>
<dbReference type="GO" id="GO:0000779">
    <property type="term" value="C:condensed chromosome, centromeric region"/>
    <property type="evidence" value="ECO:0007669"/>
    <property type="project" value="Ensembl"/>
</dbReference>
<dbReference type="GO" id="GO:0000228">
    <property type="term" value="C:nuclear chromosome"/>
    <property type="evidence" value="ECO:0007669"/>
    <property type="project" value="Ensembl"/>
</dbReference>
<dbReference type="GO" id="GO:0005634">
    <property type="term" value="C:nucleus"/>
    <property type="evidence" value="ECO:0000318"/>
    <property type="project" value="GO_Central"/>
</dbReference>
<dbReference type="GO" id="GO:0005721">
    <property type="term" value="C:pericentric heterochromatin"/>
    <property type="evidence" value="ECO:0000318"/>
    <property type="project" value="GO_Central"/>
</dbReference>
<dbReference type="GO" id="GO:0016605">
    <property type="term" value="C:PML body"/>
    <property type="evidence" value="ECO:0007669"/>
    <property type="project" value="UniProtKB-SubCell"/>
</dbReference>
<dbReference type="GO" id="GO:0005524">
    <property type="term" value="F:ATP binding"/>
    <property type="evidence" value="ECO:0007669"/>
    <property type="project" value="UniProtKB-KW"/>
</dbReference>
<dbReference type="GO" id="GO:0016887">
    <property type="term" value="F:ATP hydrolysis activity"/>
    <property type="evidence" value="ECO:0007669"/>
    <property type="project" value="RHEA"/>
</dbReference>
<dbReference type="GO" id="GO:0003682">
    <property type="term" value="F:chromatin binding"/>
    <property type="evidence" value="ECO:0000250"/>
    <property type="project" value="UniProtKB"/>
</dbReference>
<dbReference type="GO" id="GO:0031490">
    <property type="term" value="F:chromatin DNA binding"/>
    <property type="evidence" value="ECO:0000318"/>
    <property type="project" value="GO_Central"/>
</dbReference>
<dbReference type="GO" id="GO:0070087">
    <property type="term" value="F:chromo shadow domain binding"/>
    <property type="evidence" value="ECO:0007669"/>
    <property type="project" value="Ensembl"/>
</dbReference>
<dbReference type="GO" id="GO:0015616">
    <property type="term" value="F:DNA translocase activity"/>
    <property type="evidence" value="ECO:0007669"/>
    <property type="project" value="Ensembl"/>
</dbReference>
<dbReference type="GO" id="GO:0004386">
    <property type="term" value="F:helicase activity"/>
    <property type="evidence" value="ECO:0007669"/>
    <property type="project" value="UniProtKB-KW"/>
</dbReference>
<dbReference type="GO" id="GO:0042393">
    <property type="term" value="F:histone binding"/>
    <property type="evidence" value="ECO:0000250"/>
    <property type="project" value="UniProtKB"/>
</dbReference>
<dbReference type="GO" id="GO:0062072">
    <property type="term" value="F:histone H3K9me2/3 reader activity"/>
    <property type="evidence" value="ECO:0007669"/>
    <property type="project" value="Ensembl"/>
</dbReference>
<dbReference type="GO" id="GO:0035064">
    <property type="term" value="F:methylated histone binding"/>
    <property type="evidence" value="ECO:0000318"/>
    <property type="project" value="GO_Central"/>
</dbReference>
<dbReference type="GO" id="GO:0008270">
    <property type="term" value="F:zinc ion binding"/>
    <property type="evidence" value="ECO:0007669"/>
    <property type="project" value="UniProtKB-KW"/>
</dbReference>
<dbReference type="GO" id="GO:0072711">
    <property type="term" value="P:cellular response to hydroxyurea"/>
    <property type="evidence" value="ECO:0000250"/>
    <property type="project" value="UniProtKB"/>
</dbReference>
<dbReference type="GO" id="GO:0006325">
    <property type="term" value="P:chromatin organization"/>
    <property type="evidence" value="ECO:0000250"/>
    <property type="project" value="UniProtKB"/>
</dbReference>
<dbReference type="GO" id="GO:0006338">
    <property type="term" value="P:chromatin remodeling"/>
    <property type="evidence" value="ECO:0000250"/>
    <property type="project" value="UniProtKB"/>
</dbReference>
<dbReference type="GO" id="GO:0070192">
    <property type="term" value="P:chromosome organization involved in meiotic cell cycle"/>
    <property type="evidence" value="ECO:0007669"/>
    <property type="project" value="Ensembl"/>
</dbReference>
<dbReference type="GO" id="GO:0030330">
    <property type="term" value="P:DNA damage response, signal transduction by p53 class mediator"/>
    <property type="evidence" value="ECO:0000250"/>
    <property type="project" value="UniProtKB"/>
</dbReference>
<dbReference type="GO" id="GO:0006281">
    <property type="term" value="P:DNA repair"/>
    <property type="evidence" value="ECO:0007669"/>
    <property type="project" value="UniProtKB-KW"/>
</dbReference>
<dbReference type="GO" id="GO:0030900">
    <property type="term" value="P:forebrain development"/>
    <property type="evidence" value="ECO:0007669"/>
    <property type="project" value="Ensembl"/>
</dbReference>
<dbReference type="GO" id="GO:0000212">
    <property type="term" value="P:meiotic spindle organization"/>
    <property type="evidence" value="ECO:0007669"/>
    <property type="project" value="Ensembl"/>
</dbReference>
<dbReference type="GO" id="GO:0035264">
    <property type="term" value="P:multicellular organism growth"/>
    <property type="evidence" value="ECO:0007669"/>
    <property type="project" value="Ensembl"/>
</dbReference>
<dbReference type="GO" id="GO:1904908">
    <property type="term" value="P:negative regulation of maintenance of mitotic sister chromatid cohesion, telomeric"/>
    <property type="evidence" value="ECO:0007669"/>
    <property type="project" value="Ensembl"/>
</dbReference>
<dbReference type="GO" id="GO:0006334">
    <property type="term" value="P:nucleosome assembly"/>
    <property type="evidence" value="ECO:0000250"/>
    <property type="project" value="UniProtKB"/>
</dbReference>
<dbReference type="GO" id="GO:0010571">
    <property type="term" value="P:positive regulation of nuclear cell cycle DNA replication"/>
    <property type="evidence" value="ECO:0000250"/>
    <property type="project" value="UniProtKB"/>
</dbReference>
<dbReference type="GO" id="GO:0032206">
    <property type="term" value="P:positive regulation of telomere maintenance"/>
    <property type="evidence" value="ECO:0000250"/>
    <property type="project" value="UniProtKB"/>
</dbReference>
<dbReference type="GO" id="GO:0045944">
    <property type="term" value="P:positive regulation of transcription by RNA polymerase II"/>
    <property type="evidence" value="ECO:0000250"/>
    <property type="project" value="UniProtKB"/>
</dbReference>
<dbReference type="GO" id="GO:0035128">
    <property type="term" value="P:post-embryonic forelimb morphogenesis"/>
    <property type="evidence" value="ECO:0007669"/>
    <property type="project" value="Ensembl"/>
</dbReference>
<dbReference type="GO" id="GO:0070198">
    <property type="term" value="P:protein localization to chromosome, telomeric region"/>
    <property type="evidence" value="ECO:0007669"/>
    <property type="project" value="Ensembl"/>
</dbReference>
<dbReference type="GO" id="GO:0031297">
    <property type="term" value="P:replication fork processing"/>
    <property type="evidence" value="ECO:0000250"/>
    <property type="project" value="UniProtKB"/>
</dbReference>
<dbReference type="GO" id="GO:0072520">
    <property type="term" value="P:seminiferous tubule development"/>
    <property type="evidence" value="ECO:0007669"/>
    <property type="project" value="Ensembl"/>
</dbReference>
<dbReference type="GO" id="GO:0060009">
    <property type="term" value="P:Sertoli cell development"/>
    <property type="evidence" value="ECO:0007669"/>
    <property type="project" value="Ensembl"/>
</dbReference>
<dbReference type="GO" id="GO:0007283">
    <property type="term" value="P:spermatogenesis"/>
    <property type="evidence" value="ECO:0007669"/>
    <property type="project" value="Ensembl"/>
</dbReference>
<dbReference type="GO" id="GO:0031509">
    <property type="term" value="P:subtelomeric heterochromatin formation"/>
    <property type="evidence" value="ECO:0000250"/>
    <property type="project" value="UniProtKB"/>
</dbReference>
<dbReference type="GO" id="GO:0006366">
    <property type="term" value="P:transcription by RNA polymerase II"/>
    <property type="evidence" value="ECO:0007669"/>
    <property type="project" value="Ensembl"/>
</dbReference>
<dbReference type="CDD" id="cd11726">
    <property type="entry name" value="ADDz_ATRX"/>
    <property type="match status" value="1"/>
</dbReference>
<dbReference type="CDD" id="cd18068">
    <property type="entry name" value="DEXHc_ATRX"/>
    <property type="match status" value="1"/>
</dbReference>
<dbReference type="CDD" id="cd18793">
    <property type="entry name" value="SF2_C_SNF"/>
    <property type="match status" value="1"/>
</dbReference>
<dbReference type="FunFam" id="3.40.50.10810:FF:000011">
    <property type="entry name" value="Transcriptional regulator ATRX homolog"/>
    <property type="match status" value="1"/>
</dbReference>
<dbReference type="FunFam" id="3.30.40.10:FF:000091">
    <property type="entry name" value="transcriptional regulator ATRX isoform X1"/>
    <property type="match status" value="1"/>
</dbReference>
<dbReference type="FunFam" id="3.40.50.300:FF:000377">
    <property type="entry name" value="transcriptional regulator ATRX isoform X1"/>
    <property type="match status" value="1"/>
</dbReference>
<dbReference type="Gene3D" id="3.40.50.300">
    <property type="entry name" value="P-loop containing nucleotide triphosphate hydrolases"/>
    <property type="match status" value="2"/>
</dbReference>
<dbReference type="Gene3D" id="1.20.120.850">
    <property type="entry name" value="SWI2/SNF2 ATPases, N-terminal domain"/>
    <property type="match status" value="1"/>
</dbReference>
<dbReference type="Gene3D" id="3.40.50.10810">
    <property type="entry name" value="Tandem AAA-ATPase domain"/>
    <property type="match status" value="1"/>
</dbReference>
<dbReference type="Gene3D" id="3.30.40.10">
    <property type="entry name" value="Zinc/RING finger domain, C3HC4 (zinc finger)"/>
    <property type="match status" value="1"/>
</dbReference>
<dbReference type="InterPro" id="IPR025766">
    <property type="entry name" value="ADD"/>
</dbReference>
<dbReference type="InterPro" id="IPR041430">
    <property type="entry name" value="ADD_ATRX"/>
</dbReference>
<dbReference type="InterPro" id="IPR052131">
    <property type="entry name" value="ATRX_domain-containing"/>
</dbReference>
<dbReference type="InterPro" id="IPR014001">
    <property type="entry name" value="Helicase_ATP-bd"/>
</dbReference>
<dbReference type="InterPro" id="IPR001650">
    <property type="entry name" value="Helicase_C-like"/>
</dbReference>
<dbReference type="InterPro" id="IPR027417">
    <property type="entry name" value="P-loop_NTPase"/>
</dbReference>
<dbReference type="InterPro" id="IPR038718">
    <property type="entry name" value="SNF2-like_sf"/>
</dbReference>
<dbReference type="InterPro" id="IPR049730">
    <property type="entry name" value="SNF2/RAD54-like_C"/>
</dbReference>
<dbReference type="InterPro" id="IPR000330">
    <property type="entry name" value="SNF2_N"/>
</dbReference>
<dbReference type="InterPro" id="IPR011011">
    <property type="entry name" value="Znf_FYVE_PHD"/>
</dbReference>
<dbReference type="InterPro" id="IPR013083">
    <property type="entry name" value="Znf_RING/FYVE/PHD"/>
</dbReference>
<dbReference type="PANTHER" id="PTHR46357">
    <property type="entry name" value="TRANSCRIPTIONAL REGULATOR ATRX"/>
    <property type="match status" value="1"/>
</dbReference>
<dbReference type="PANTHER" id="PTHR46357:SF1">
    <property type="entry name" value="TRANSCRIPTIONAL REGULATOR ATRX"/>
    <property type="match status" value="1"/>
</dbReference>
<dbReference type="Pfam" id="PF17981">
    <property type="entry name" value="ADD_ATRX"/>
    <property type="match status" value="1"/>
</dbReference>
<dbReference type="Pfam" id="PF00271">
    <property type="entry name" value="Helicase_C"/>
    <property type="match status" value="1"/>
</dbReference>
<dbReference type="Pfam" id="PF00176">
    <property type="entry name" value="SNF2-rel_dom"/>
    <property type="match status" value="1"/>
</dbReference>
<dbReference type="SMART" id="SM00487">
    <property type="entry name" value="DEXDc"/>
    <property type="match status" value="1"/>
</dbReference>
<dbReference type="SMART" id="SM00490">
    <property type="entry name" value="HELICc"/>
    <property type="match status" value="1"/>
</dbReference>
<dbReference type="SUPFAM" id="SSF57903">
    <property type="entry name" value="FYVE/PHD zinc finger"/>
    <property type="match status" value="1"/>
</dbReference>
<dbReference type="SUPFAM" id="SSF52540">
    <property type="entry name" value="P-loop containing nucleoside triphosphate hydrolases"/>
    <property type="match status" value="2"/>
</dbReference>
<dbReference type="PROSITE" id="PS51533">
    <property type="entry name" value="ADD"/>
    <property type="match status" value="1"/>
</dbReference>
<dbReference type="PROSITE" id="PS51192">
    <property type="entry name" value="HELICASE_ATP_BIND_1"/>
    <property type="match status" value="1"/>
</dbReference>
<dbReference type="PROSITE" id="PS51194">
    <property type="entry name" value="HELICASE_CTER"/>
    <property type="match status" value="1"/>
</dbReference>
<name>ATRX_PANTR</name>
<proteinExistence type="evidence at transcript level"/>
<feature type="chain" id="PRO_0000074304" description="Transcriptional regulator ATRX">
    <location>
        <begin position="1"/>
        <end position="2492"/>
    </location>
</feature>
<feature type="domain" description="ADD" evidence="7">
    <location>
        <begin position="159"/>
        <end position="296"/>
    </location>
</feature>
<feature type="domain" description="Helicase ATP-binding" evidence="5">
    <location>
        <begin position="1581"/>
        <end position="1768"/>
    </location>
</feature>
<feature type="domain" description="Helicase C-terminal" evidence="6">
    <location>
        <begin position="2025"/>
        <end position="2205"/>
    </location>
</feature>
<feature type="zinc finger region" description="GATA-type; atypical" evidence="7">
    <location>
        <begin position="170"/>
        <end position="206"/>
    </location>
</feature>
<feature type="zinc finger region" description="PHD-type; atypical" evidence="7">
    <location>
        <begin position="217"/>
        <end position="272"/>
    </location>
</feature>
<feature type="region of interest" description="Disordered" evidence="8">
    <location>
        <begin position="1"/>
        <end position="146"/>
    </location>
</feature>
<feature type="region of interest" description="Disordered" evidence="8">
    <location>
        <begin position="445"/>
        <end position="614"/>
    </location>
</feature>
<feature type="region of interest" description="Disordered" evidence="8">
    <location>
        <begin position="648"/>
        <end position="1479"/>
    </location>
</feature>
<feature type="region of interest" description="Interaction with DAXX" evidence="1">
    <location>
        <begin position="1189"/>
        <end position="1326"/>
    </location>
</feature>
<feature type="region of interest" description="Disordered" evidence="8">
    <location>
        <begin position="1913"/>
        <end position="2000"/>
    </location>
</feature>
<feature type="region of interest" description="Interaction with MECP2" evidence="1">
    <location>
        <begin position="2010"/>
        <end position="2280"/>
    </location>
</feature>
<feature type="region of interest" description="Disordered" evidence="8">
    <location>
        <begin position="2462"/>
        <end position="2492"/>
    </location>
</feature>
<feature type="short sequence motif" description="PxVxL motif">
    <location>
        <begin position="581"/>
        <end position="594"/>
    </location>
</feature>
<feature type="short sequence motif" description="DEGH box">
    <location>
        <begin position="1719"/>
        <end position="1722"/>
    </location>
</feature>
<feature type="compositionally biased region" description="Basic and acidic residues" evidence="8">
    <location>
        <begin position="17"/>
        <end position="27"/>
    </location>
</feature>
<feature type="compositionally biased region" description="Polar residues" evidence="8">
    <location>
        <begin position="40"/>
        <end position="57"/>
    </location>
</feature>
<feature type="compositionally biased region" description="Basic and acidic residues" evidence="8">
    <location>
        <begin position="58"/>
        <end position="72"/>
    </location>
</feature>
<feature type="compositionally biased region" description="Acidic residues" evidence="8">
    <location>
        <begin position="92"/>
        <end position="108"/>
    </location>
</feature>
<feature type="compositionally biased region" description="Basic and acidic residues" evidence="8">
    <location>
        <begin position="135"/>
        <end position="146"/>
    </location>
</feature>
<feature type="compositionally biased region" description="Basic and acidic residues" evidence="8">
    <location>
        <begin position="445"/>
        <end position="502"/>
    </location>
</feature>
<feature type="compositionally biased region" description="Polar residues" evidence="8">
    <location>
        <begin position="550"/>
        <end position="567"/>
    </location>
</feature>
<feature type="compositionally biased region" description="Basic and acidic residues" evidence="8">
    <location>
        <begin position="755"/>
        <end position="777"/>
    </location>
</feature>
<feature type="compositionally biased region" description="Basic and acidic residues" evidence="8">
    <location>
        <begin position="843"/>
        <end position="864"/>
    </location>
</feature>
<feature type="compositionally biased region" description="Basic and acidic residues" evidence="8">
    <location>
        <begin position="878"/>
        <end position="887"/>
    </location>
</feature>
<feature type="compositionally biased region" description="Basic and acidic residues" evidence="8">
    <location>
        <begin position="894"/>
        <end position="909"/>
    </location>
</feature>
<feature type="compositionally biased region" description="Basic and acidic residues" evidence="8">
    <location>
        <begin position="920"/>
        <end position="944"/>
    </location>
</feature>
<feature type="compositionally biased region" description="Basic residues" evidence="8">
    <location>
        <begin position="945"/>
        <end position="955"/>
    </location>
</feature>
<feature type="compositionally biased region" description="Basic and acidic residues" evidence="8">
    <location>
        <begin position="964"/>
        <end position="1004"/>
    </location>
</feature>
<feature type="compositionally biased region" description="Basic and acidic residues" evidence="8">
    <location>
        <begin position="1015"/>
        <end position="1027"/>
    </location>
</feature>
<feature type="compositionally biased region" description="Basic residues" evidence="8">
    <location>
        <begin position="1045"/>
        <end position="1055"/>
    </location>
</feature>
<feature type="compositionally biased region" description="Basic and acidic residues" evidence="8">
    <location>
        <begin position="1056"/>
        <end position="1082"/>
    </location>
</feature>
<feature type="compositionally biased region" description="Basic residues" evidence="8">
    <location>
        <begin position="1090"/>
        <end position="1102"/>
    </location>
</feature>
<feature type="compositionally biased region" description="Basic and acidic residues" evidence="8">
    <location>
        <begin position="1103"/>
        <end position="1139"/>
    </location>
</feature>
<feature type="compositionally biased region" description="Basic residues" evidence="8">
    <location>
        <begin position="1168"/>
        <end position="1195"/>
    </location>
</feature>
<feature type="compositionally biased region" description="Polar residues" evidence="8">
    <location>
        <begin position="1233"/>
        <end position="1246"/>
    </location>
</feature>
<feature type="compositionally biased region" description="Basic and acidic residues" evidence="8">
    <location>
        <begin position="1267"/>
        <end position="1281"/>
    </location>
</feature>
<feature type="compositionally biased region" description="Acidic residues" evidence="8">
    <location>
        <begin position="1286"/>
        <end position="1297"/>
    </location>
</feature>
<feature type="compositionally biased region" description="Basic and acidic residues" evidence="8">
    <location>
        <begin position="1298"/>
        <end position="1308"/>
    </location>
</feature>
<feature type="compositionally biased region" description="Basic residues" evidence="8">
    <location>
        <begin position="1334"/>
        <end position="1345"/>
    </location>
</feature>
<feature type="compositionally biased region" description="Basic and acidic residues" evidence="8">
    <location>
        <begin position="1353"/>
        <end position="1368"/>
    </location>
</feature>
<feature type="compositionally biased region" description="Basic and acidic residues" evidence="8">
    <location>
        <begin position="1408"/>
        <end position="1417"/>
    </location>
</feature>
<feature type="compositionally biased region" description="Basic residues" evidence="8">
    <location>
        <begin position="1419"/>
        <end position="1428"/>
    </location>
</feature>
<feature type="compositionally biased region" description="Acidic residues" evidence="8">
    <location>
        <begin position="1443"/>
        <end position="1468"/>
    </location>
</feature>
<feature type="compositionally biased region" description="Basic residues" evidence="8">
    <location>
        <begin position="1929"/>
        <end position="1938"/>
    </location>
</feature>
<feature type="compositionally biased region" description="Low complexity" evidence="8">
    <location>
        <begin position="1990"/>
        <end position="1999"/>
    </location>
</feature>
<feature type="compositionally biased region" description="Pro residues" evidence="8">
    <location>
        <begin position="2468"/>
        <end position="2479"/>
    </location>
</feature>
<feature type="binding site" evidence="5">
    <location>
        <begin position="1594"/>
        <end position="1601"/>
    </location>
    <ligand>
        <name>ATP</name>
        <dbReference type="ChEBI" id="CHEBI:30616"/>
    </ligand>
</feature>
<feature type="modified residue" description="Phosphoserine" evidence="2">
    <location>
        <position position="25"/>
    </location>
</feature>
<feature type="modified residue" description="Phosphoserine" evidence="2">
    <location>
        <position position="34"/>
    </location>
</feature>
<feature type="modified residue" description="Phosphotyrosine" evidence="2">
    <location>
        <position position="89"/>
    </location>
</feature>
<feature type="modified residue" description="Phosphoserine" evidence="2">
    <location>
        <position position="92"/>
    </location>
</feature>
<feature type="modified residue" description="Phosphoserine" evidence="2">
    <location>
        <position position="112"/>
    </location>
</feature>
<feature type="modified residue" description="Phosphoserine" evidence="4">
    <location>
        <position position="213"/>
    </location>
</feature>
<feature type="modified residue" description="Phosphoserine" evidence="2">
    <location>
        <position position="316"/>
    </location>
</feature>
<feature type="modified residue" description="Phosphothreonine" evidence="2">
    <location>
        <position position="591"/>
    </location>
</feature>
<feature type="modified residue" description="Phosphoserine" evidence="2">
    <location>
        <position position="594"/>
    </location>
</feature>
<feature type="modified residue" description="Phosphoserine" evidence="2">
    <location>
        <position position="598"/>
    </location>
</feature>
<feature type="modified residue" description="Phosphoserine" evidence="2">
    <location>
        <position position="634"/>
    </location>
</feature>
<feature type="modified residue" description="Phosphothreonine" evidence="2">
    <location>
        <position position="674"/>
    </location>
</feature>
<feature type="modified residue" description="Phosphoserine" evidence="2">
    <location>
        <position position="675"/>
    </location>
</feature>
<feature type="modified residue" description="Phosphoserine" evidence="2">
    <location>
        <position position="677"/>
    </location>
</feature>
<feature type="modified residue" description="Phosphoserine" evidence="2">
    <location>
        <position position="729"/>
    </location>
</feature>
<feature type="modified residue" description="Phosphoserine" evidence="2">
    <location>
        <position position="731"/>
    </location>
</feature>
<feature type="modified residue" description="Phosphoserine" evidence="4">
    <location>
        <position position="784"/>
    </location>
</feature>
<feature type="modified residue" description="Phosphoserine" evidence="2">
    <location>
        <position position="819"/>
    </location>
</feature>
<feature type="modified residue" description="Phosphoserine" evidence="2">
    <location>
        <position position="849"/>
    </location>
</feature>
<feature type="modified residue" description="Phosphoserine" evidence="2">
    <location>
        <position position="850"/>
    </location>
</feature>
<feature type="modified residue" description="Phosphoserine" evidence="2">
    <location>
        <position position="875"/>
    </location>
</feature>
<feature type="modified residue" description="Phosphoserine" evidence="2">
    <location>
        <position position="876"/>
    </location>
</feature>
<feature type="modified residue" description="Phosphoserine" evidence="2">
    <location>
        <position position="889"/>
    </location>
</feature>
<feature type="modified residue" description="Phosphoserine" evidence="2">
    <location>
        <position position="962"/>
    </location>
</feature>
<feature type="modified residue" description="N6-acetyllysine" evidence="2">
    <location>
        <position position="967"/>
    </location>
</feature>
<feature type="modified residue" description="Phosphoserine" evidence="2">
    <location>
        <position position="974"/>
    </location>
</feature>
<feature type="modified residue" description="Phosphothreonine" evidence="2">
    <location>
        <position position="977"/>
    </location>
</feature>
<feature type="modified residue" description="Phosphoserine" evidence="3">
    <location>
        <position position="1011"/>
    </location>
</feature>
<feature type="modified residue" description="Phosphoserine" evidence="3">
    <location>
        <position position="1012"/>
    </location>
</feature>
<feature type="modified residue" description="Phosphoserine" evidence="3">
    <location>
        <position position="1013"/>
    </location>
</feature>
<feature type="modified residue" description="Phosphoserine" evidence="2">
    <location>
        <position position="1061"/>
    </location>
</feature>
<feature type="modified residue" description="Phosphotyrosine" evidence="2">
    <location>
        <position position="1063"/>
    </location>
</feature>
<feature type="modified residue" description="Phosphoserine" evidence="4">
    <location>
        <position position="1244"/>
    </location>
</feature>
<feature type="modified residue" description="Phosphoserine" evidence="4">
    <location>
        <position position="1245"/>
    </location>
</feature>
<feature type="modified residue" description="Phosphoserine" evidence="4">
    <location>
        <position position="1253"/>
    </location>
</feature>
<feature type="modified residue" description="Phosphoserine" evidence="2">
    <location>
        <position position="1322"/>
    </location>
</feature>
<feature type="modified residue" description="Phosphoserine" evidence="2">
    <location>
        <position position="1324"/>
    </location>
</feature>
<feature type="modified residue" description="Phosphoserine" evidence="2">
    <location>
        <position position="1326"/>
    </location>
</feature>
<feature type="modified residue" description="Phosphoserine" evidence="2">
    <location>
        <position position="1348"/>
    </location>
</feature>
<feature type="modified residue" description="Phosphoserine" evidence="2">
    <location>
        <position position="1352"/>
    </location>
</feature>
<feature type="modified residue" description="Phosphoserine" evidence="2">
    <location>
        <position position="1527"/>
    </location>
</feature>
<feature type="modified residue" description="Phosphothreonine" evidence="2">
    <location>
        <position position="1529"/>
    </location>
</feature>
<feature type="modified residue" description="Phosphoserine" evidence="4">
    <location>
        <position position="1906"/>
    </location>
</feature>
<feature type="modified residue" description="Phosphoserine" evidence="4">
    <location>
        <position position="1913"/>
    </location>
</feature>
<feature type="modified residue" description="Phosphoserine" evidence="2">
    <location>
        <position position="1992"/>
    </location>
</feature>
<feature type="modified residue" description="Phosphoserine" evidence="2">
    <location>
        <position position="1996"/>
    </location>
</feature>
<feature type="modified residue" description="Phosphoserine" evidence="2">
    <location>
        <position position="2220"/>
    </location>
</feature>
<feature type="modified residue" description="Omega-N-methylarginine" evidence="4">
    <location>
        <position position="2474"/>
    </location>
</feature>
<feature type="modified residue" description="Omega-N-methylarginine" evidence="4">
    <location>
        <position position="2480"/>
    </location>
</feature>
<feature type="cross-link" description="Glycyl lysine isopeptide (Lys-Gly) (interchain with G-Cter in SUMO2)" evidence="2">
    <location>
        <position position="10"/>
    </location>
</feature>
<feature type="cross-link" description="Glycyl lysine isopeptide (Lys-Gly) (interchain with G-Cter in SUMO2)" evidence="2">
    <location>
        <position position="138"/>
    </location>
</feature>
<feature type="cross-link" description="Glycyl lysine isopeptide (Lys-Gly) (interchain with G-Cter in SUMO2)" evidence="2">
    <location>
        <position position="142"/>
    </location>
</feature>
<feature type="cross-link" description="Glycyl lysine isopeptide (Lys-Gly) (interchain with G-Cter in SUMO2)" evidence="2">
    <location>
        <position position="299"/>
    </location>
</feature>
<feature type="cross-link" description="Glycyl lysine isopeptide (Lys-Gly) (interchain with G-Cter in SUMO2)" evidence="2">
    <location>
        <position position="438"/>
    </location>
</feature>
<feature type="cross-link" description="Glycyl lysine isopeptide (Lys-Gly) (interchain with G-Cter in SUMO1); alternate" evidence="2">
    <location>
        <position position="623"/>
    </location>
</feature>
<feature type="cross-link" description="Glycyl lysine isopeptide (Lys-Gly) (interchain with G-Cter in SUMO2); alternate" evidence="2">
    <location>
        <position position="623"/>
    </location>
</feature>
<feature type="cross-link" description="Glycyl lysine isopeptide (Lys-Gly) (interchain with G-Cter in SUMO2)" evidence="2">
    <location>
        <position position="1004"/>
    </location>
</feature>
<feature type="cross-link" description="Glycyl lysine isopeptide (Lys-Gly) (interchain with G-Cter in SUMO2)" evidence="2">
    <location>
        <position position="1488"/>
    </location>
</feature>
<feature type="cross-link" description="Glycyl lysine isopeptide (Lys-Gly) (interchain with G-Cter in SUMO1); alternate" evidence="2">
    <location>
        <position position="1982"/>
    </location>
</feature>
<feature type="cross-link" description="Glycyl lysine isopeptide (Lys-Gly) (interchain with G-Cter in SUMO2); alternate" evidence="2">
    <location>
        <position position="1982"/>
    </location>
</feature>
<feature type="cross-link" description="Glycyl lysine isopeptide (Lys-Gly) (interchain with G-Cter in SUMO2)" evidence="2">
    <location>
        <position position="1987"/>
    </location>
</feature>
<gene>
    <name type="primary">ATRX</name>
</gene>
<organism>
    <name type="scientific">Pan troglodytes</name>
    <name type="common">Chimpanzee</name>
    <dbReference type="NCBI Taxonomy" id="9598"/>
    <lineage>
        <taxon>Eukaryota</taxon>
        <taxon>Metazoa</taxon>
        <taxon>Chordata</taxon>
        <taxon>Craniata</taxon>
        <taxon>Vertebrata</taxon>
        <taxon>Euteleostomi</taxon>
        <taxon>Mammalia</taxon>
        <taxon>Eutheria</taxon>
        <taxon>Euarchontoglires</taxon>
        <taxon>Primates</taxon>
        <taxon>Haplorrhini</taxon>
        <taxon>Catarrhini</taxon>
        <taxon>Hominidae</taxon>
        <taxon>Pan</taxon>
    </lineage>
</organism>
<evidence type="ECO:0000250" key="1"/>
<evidence type="ECO:0000250" key="2">
    <source>
        <dbReference type="UniProtKB" id="P46100"/>
    </source>
</evidence>
<evidence type="ECO:0000250" key="3">
    <source>
        <dbReference type="UniProtKB" id="P70486"/>
    </source>
</evidence>
<evidence type="ECO:0000250" key="4">
    <source>
        <dbReference type="UniProtKB" id="Q61687"/>
    </source>
</evidence>
<evidence type="ECO:0000255" key="5">
    <source>
        <dbReference type="PROSITE-ProRule" id="PRU00541"/>
    </source>
</evidence>
<evidence type="ECO:0000255" key="6">
    <source>
        <dbReference type="PROSITE-ProRule" id="PRU00542"/>
    </source>
</evidence>
<evidence type="ECO:0000255" key="7">
    <source>
        <dbReference type="PROSITE-ProRule" id="PRU00865"/>
    </source>
</evidence>
<evidence type="ECO:0000256" key="8">
    <source>
        <dbReference type="SAM" id="MobiDB-lite"/>
    </source>
</evidence>
<evidence type="ECO:0000305" key="9"/>
<reference key="1">
    <citation type="journal article" date="2003" name="Mol. Biol. Evol.">
        <title>Gene diversity patterns at 10 X-chromosomal loci in humans and chimpanzees.</title>
        <authorList>
            <person name="Kitano T."/>
            <person name="Schwarz C."/>
            <person name="Nickel B."/>
            <person name="Paeaebo S."/>
        </authorList>
    </citation>
    <scope>NUCLEOTIDE SEQUENCE [MRNA]</scope>
</reference>